<feature type="signal peptide" evidence="3">
    <location>
        <begin position="1"/>
        <end position="27"/>
    </location>
</feature>
<feature type="chain" id="PRO_5007666575" description="GDSL lipase">
    <location>
        <begin position="28"/>
        <end position="365"/>
    </location>
</feature>
<feature type="active site" description="Nucleophile" evidence="1">
    <location>
        <position position="40"/>
    </location>
</feature>
<feature type="active site" description="Charge relay system" evidence="1">
    <location>
        <position position="318"/>
    </location>
</feature>
<feature type="active site" description="Charge relay system" evidence="1">
    <location>
        <position position="321"/>
    </location>
</feature>
<feature type="site" description="Transition state stabilizer" evidence="1">
    <location>
        <position position="137"/>
    </location>
</feature>
<feature type="site" description="Transition state stabilizer" evidence="1">
    <location>
        <position position="168"/>
    </location>
</feature>
<feature type="glycosylation site" description="N-linked (GlcNAc...) asparagine" evidence="2">
    <location>
        <position position="189"/>
    </location>
</feature>
<feature type="glycosylation site" description="N-linked (GlcNAc...) asparagine" evidence="2">
    <location>
        <position position="310"/>
    </location>
</feature>
<feature type="mutagenesis site" description="Reduced acyltransferase and esterase activities." evidence="3">
    <original>S</original>
    <variation>A</variation>
    <location>
        <position position="40"/>
    </location>
</feature>
<feature type="sequence conflict" description="In Ref. 2; AEZ63359." evidence="9" ref="2">
    <original>D</original>
    <variation>Y</variation>
    <location>
        <position position="103"/>
    </location>
</feature>
<feature type="sequence conflict" description="In Ref. 2; AEZ63353/AEZ63354/AEZ63355." evidence="9" ref="2">
    <original>T</original>
    <variation>A</variation>
    <location>
        <position position="227"/>
    </location>
</feature>
<feature type="sequence conflict" description="In Ref. 2; AEZ63353/AEZ63354/AEZ63355." evidence="9" ref="2">
    <original>QLEKQ</original>
    <variation>HLEKE</variation>
    <location>
        <begin position="249"/>
        <end position="253"/>
    </location>
</feature>
<feature type="sequence conflict" description="In Ref. 2; AEZ63356/AEZ63353/AEZ63354/AEZ63355." evidence="9" ref="2">
    <original>Y</original>
    <variation>F</variation>
    <location>
        <position position="359"/>
    </location>
</feature>
<gene>
    <name evidence="6 7" type="primary">GLIP</name>
</gene>
<reference key="1">
    <citation type="journal article" date="2012" name="Plant Cell">
        <title>Bidirectional secretions from glandular trichomes of pyrethrum enable immunization of seedlings.</title>
        <authorList>
            <person name="Ramirez A.M."/>
            <person name="Stoopen G."/>
            <person name="Menzel T.R."/>
            <person name="Gols R."/>
            <person name="Bouwmeester H.J."/>
            <person name="Dicke M."/>
            <person name="Jongsma M.A."/>
        </authorList>
    </citation>
    <scope>NUCLEOTIDE SEQUENCE [GENOMIC DNA]</scope>
    <scope>TISSUE SPECIFICITY</scope>
    <scope>DEVELOPMENTAL STAGE</scope>
    <source>
        <tissue>Ovary</tissue>
    </source>
</reference>
<reference key="2">
    <citation type="journal article" date="2012" name="Plant J.">
        <title>Identification and characterization of a GDSL lipase-like protein that catalyzes the ester-forming reaction for pyrethrin biosynthesis in Tanacetum cinerariifolium- a new target for plant protection.</title>
        <authorList>
            <person name="Kikuta Y."/>
            <person name="Ueda H."/>
            <person name="Takahashi M."/>
            <person name="Mitsumori T."/>
            <person name="Yamada G."/>
            <person name="Sakamori K."/>
            <person name="Takeda K."/>
            <person name="Furutani S."/>
            <person name="Nakayama K."/>
            <person name="Katsuda Y."/>
            <person name="Hatanaka A."/>
            <person name="Matsuda K."/>
        </authorList>
    </citation>
    <scope>NUCLEOTIDE SEQUENCE [GENOMIC DNA / MRNA]</scope>
    <scope>PROTEIN SEQUENCE OF 28-60 AND 145-151</scope>
    <scope>FUNCTION</scope>
    <scope>MUTAGENESIS OF SER-40</scope>
    <scope>SUBCELLULAR LOCATION</scope>
    <scope>CATALYTIC ACTIVITY</scope>
    <scope>BIOPHYSICOCHEMICAL PROPERTIES</scope>
    <scope>TISSUE SPECIFICITY</scope>
    <scope>INDUCTION BY WOUNDING</scope>
</reference>
<reference key="3">
    <citation type="journal article" date="2005" name="Phytochemistry">
        <title>Biosynthesis of pyrethrin I in seedlings of Chrysanthemum cinerariaefolium.</title>
        <authorList>
            <person name="Matsuda K."/>
            <person name="Kikuta Y."/>
            <person name="Haba A."/>
            <person name="Nakayama K."/>
            <person name="Katsuda Y."/>
            <person name="Hatanaka A."/>
            <person name="Komai K."/>
        </authorList>
    </citation>
    <scope>REVIEW</scope>
</reference>
<reference key="4">
    <citation type="journal article" date="2018" name="Plant Physiol.">
        <title>Coexpression analysis identifies two oxidoreductases involved in the biosynthesis of the monoterpene acid moiety of natural pyrethrin insecticides in Tanacetum cinerariifolium.</title>
        <authorList>
            <person name="Xu H."/>
            <person name="Moghe G.D."/>
            <person name="Wiegert-Rininger K."/>
            <person name="Schilmiller A.L."/>
            <person name="Barry C.S."/>
            <person name="Last R.L."/>
            <person name="Pichersky E."/>
        </authorList>
    </citation>
    <scope>TISSUE SPECIFICITY</scope>
</reference>
<reference key="5">
    <citation type="journal article" date="2019" name="Nat. Prod. Rep.">
        <title>Non-volatile natural products in plant glandular trichomes: chemistry, biological activities and biosynthesis.</title>
        <authorList>
            <person name="Liu Y."/>
            <person name="Jing S.-X."/>
            <person name="Luo S.-H."/>
            <person name="Li S.-H."/>
        </authorList>
    </citation>
    <scope>REVIEW</scope>
</reference>
<evidence type="ECO:0000250" key="1">
    <source>
        <dbReference type="UniProtKB" id="Q09LX1"/>
    </source>
</evidence>
<evidence type="ECO:0000255" key="2">
    <source>
        <dbReference type="PROSITE-ProRule" id="PRU00498"/>
    </source>
</evidence>
<evidence type="ECO:0000269" key="3">
    <source>
    </source>
</evidence>
<evidence type="ECO:0000269" key="4">
    <source>
    </source>
</evidence>
<evidence type="ECO:0000269" key="5">
    <source>
    </source>
</evidence>
<evidence type="ECO:0000303" key="6">
    <source>
    </source>
</evidence>
<evidence type="ECO:0000303" key="7">
    <source>
    </source>
</evidence>
<evidence type="ECO:0000303" key="8">
    <source>
    </source>
</evidence>
<evidence type="ECO:0000305" key="9"/>
<evidence type="ECO:0000305" key="10">
    <source>
    </source>
</evidence>
<dbReference type="EC" id="3.1.1.-" evidence="9"/>
<dbReference type="EMBL" id="JQ513384">
    <property type="protein sequence ID" value="AFJ04755.1"/>
    <property type="molecule type" value="Genomic_DNA"/>
</dbReference>
<dbReference type="EMBL" id="JX913533">
    <property type="protein sequence ID" value="AGC03152.1"/>
    <property type="molecule type" value="mRNA"/>
</dbReference>
<dbReference type="EMBL" id="JN418990">
    <property type="protein sequence ID" value="AEZ63353.1"/>
    <property type="molecule type" value="mRNA"/>
</dbReference>
<dbReference type="EMBL" id="JN418992">
    <property type="protein sequence ID" value="AEZ63355.1"/>
    <property type="molecule type" value="mRNA"/>
</dbReference>
<dbReference type="EMBL" id="JN418991">
    <property type="protein sequence ID" value="AEZ63354.1"/>
    <property type="molecule type" value="mRNA"/>
</dbReference>
<dbReference type="EMBL" id="JN418993">
    <property type="protein sequence ID" value="AEZ63356.1"/>
    <property type="molecule type" value="mRNA"/>
</dbReference>
<dbReference type="EMBL" id="JN418994">
    <property type="protein sequence ID" value="AEZ63357.1"/>
    <property type="molecule type" value="mRNA"/>
</dbReference>
<dbReference type="EMBL" id="JN418995">
    <property type="protein sequence ID" value="AEZ63358.1"/>
    <property type="molecule type" value="mRNA"/>
</dbReference>
<dbReference type="EMBL" id="JN418996">
    <property type="protein sequence ID" value="AEZ63359.1"/>
    <property type="molecule type" value="mRNA"/>
</dbReference>
<dbReference type="SMR" id="H6U1I8"/>
<dbReference type="GlyCosmos" id="H6U1I8">
    <property type="glycosylation" value="2 sites, No reported glycans"/>
</dbReference>
<dbReference type="GO" id="GO:0005615">
    <property type="term" value="C:extracellular space"/>
    <property type="evidence" value="ECO:0000314"/>
    <property type="project" value="UniProtKB"/>
</dbReference>
<dbReference type="GO" id="GO:0016746">
    <property type="term" value="F:acyltransferase activity"/>
    <property type="evidence" value="ECO:0000315"/>
    <property type="project" value="UniProtKB"/>
</dbReference>
<dbReference type="GO" id="GO:0016788">
    <property type="term" value="F:hydrolase activity, acting on ester bonds"/>
    <property type="evidence" value="ECO:0000315"/>
    <property type="project" value="UniProtKB"/>
</dbReference>
<dbReference type="GO" id="GO:0016298">
    <property type="term" value="F:lipase activity"/>
    <property type="evidence" value="ECO:0007669"/>
    <property type="project" value="TreeGrafter"/>
</dbReference>
<dbReference type="GO" id="GO:0016412">
    <property type="term" value="F:serine O-acyltransferase activity"/>
    <property type="evidence" value="ECO:0000315"/>
    <property type="project" value="CACAO"/>
</dbReference>
<dbReference type="GO" id="GO:0008299">
    <property type="term" value="P:isoprenoid biosynthetic process"/>
    <property type="evidence" value="ECO:0000314"/>
    <property type="project" value="UniProtKB"/>
</dbReference>
<dbReference type="GO" id="GO:0016042">
    <property type="term" value="P:lipid catabolic process"/>
    <property type="evidence" value="ECO:0007669"/>
    <property type="project" value="UniProtKB-KW"/>
</dbReference>
<dbReference type="GO" id="GO:0009611">
    <property type="term" value="P:response to wounding"/>
    <property type="evidence" value="ECO:0000270"/>
    <property type="project" value="UniProtKB"/>
</dbReference>
<dbReference type="CDD" id="cd01837">
    <property type="entry name" value="SGNH_plant_lipase_like"/>
    <property type="match status" value="1"/>
</dbReference>
<dbReference type="Gene3D" id="3.40.50.1110">
    <property type="entry name" value="SGNH hydrolase"/>
    <property type="match status" value="1"/>
</dbReference>
<dbReference type="InterPro" id="IPR001087">
    <property type="entry name" value="GDSL"/>
</dbReference>
<dbReference type="InterPro" id="IPR044552">
    <property type="entry name" value="GLIP1-5/GLL25"/>
</dbReference>
<dbReference type="InterPro" id="IPR036514">
    <property type="entry name" value="SGNH_hydro_sf"/>
</dbReference>
<dbReference type="InterPro" id="IPR035669">
    <property type="entry name" value="SGNH_plant_lipase-like"/>
</dbReference>
<dbReference type="PANTHER" id="PTHR45966:SF1">
    <property type="entry name" value="GDSL ESTERASE_LIPASE 1-RELATED"/>
    <property type="match status" value="1"/>
</dbReference>
<dbReference type="PANTHER" id="PTHR45966">
    <property type="entry name" value="GDSL-LIKE LIPASE/ACYLHYDROLASE"/>
    <property type="match status" value="1"/>
</dbReference>
<dbReference type="Pfam" id="PF00657">
    <property type="entry name" value="Lipase_GDSL"/>
    <property type="match status" value="1"/>
</dbReference>
<dbReference type="SUPFAM" id="SSF52266">
    <property type="entry name" value="SGNH hydrolase"/>
    <property type="match status" value="1"/>
</dbReference>
<organism>
    <name type="scientific">Tanacetum cinerariifolium</name>
    <name type="common">Dalmatian daisy</name>
    <name type="synonym">Chrysanthemum cinerariifolium</name>
    <dbReference type="NCBI Taxonomy" id="118510"/>
    <lineage>
        <taxon>Eukaryota</taxon>
        <taxon>Viridiplantae</taxon>
        <taxon>Streptophyta</taxon>
        <taxon>Embryophyta</taxon>
        <taxon>Tracheophyta</taxon>
        <taxon>Spermatophyta</taxon>
        <taxon>Magnoliopsida</taxon>
        <taxon>eudicotyledons</taxon>
        <taxon>Gunneridae</taxon>
        <taxon>Pentapetalae</taxon>
        <taxon>asterids</taxon>
        <taxon>campanulids</taxon>
        <taxon>Asterales</taxon>
        <taxon>Asteraceae</taxon>
        <taxon>Asteroideae</taxon>
        <taxon>Anthemideae</taxon>
        <taxon>Anthemidinae</taxon>
        <taxon>Tanacetum</taxon>
    </lineage>
</organism>
<comment type="function">
    <text evidence="3 8">Component of the monoterpenoid pyrethrins biosynthesis; pyrethrins are widely used plant-derived pesticide (PubMed:30468448). Acyltransferase that catalyzes the esterification of terpene acids and lipid alcohol substrates into pyrethrins; mediates the transfer of a chrysanthemoyl moiety from the coenzyme A (CoA) thio-ester chrysanthemoyl CoA to pyrethrolone, and, to a lower extent, to jasmololone and cinerolone thus producing pyrethrins (e.g. pyrethrin type I) (PubMed:22385412). Can also use pyrethroyl CoA as substrate (PubMed:22385412). Also has esterase activity, being able to cleave the ester bond of pyrethrin I, p-nitrophenyl butanoate and p-nitrophenyl octanoate to produce pyrethrolone and p-nitrophenol, respectively (PubMed:22385412).</text>
</comment>
<comment type="catalytic activity">
    <reaction evidence="3">
        <text>(Z,S)-pyrethrolone + (1R,3R)-chrysanthemoyl-CoA = pyrethrin I + CoA</text>
        <dbReference type="Rhea" id="RHEA:60744"/>
        <dbReference type="ChEBI" id="CHEBI:27815"/>
        <dbReference type="ChEBI" id="CHEBI:39111"/>
        <dbReference type="ChEBI" id="CHEBI:57287"/>
        <dbReference type="ChEBI" id="CHEBI:143950"/>
    </reaction>
    <physiologicalReaction direction="left-to-right" evidence="3">
        <dbReference type="Rhea" id="RHEA:60745"/>
    </physiologicalReaction>
</comment>
<comment type="catalytic activity">
    <reaction evidence="3">
        <text>(Z,S)-pyrethrolone + (1R,3R)-pyrethroyl-CoA = pyrethrin II + CoA</text>
        <dbReference type="Rhea" id="RHEA:60748"/>
        <dbReference type="ChEBI" id="CHEBI:27474"/>
        <dbReference type="ChEBI" id="CHEBI:39111"/>
        <dbReference type="ChEBI" id="CHEBI:57287"/>
        <dbReference type="ChEBI" id="CHEBI:143953"/>
    </reaction>
    <physiologicalReaction direction="left-to-right" evidence="3">
        <dbReference type="Rhea" id="RHEA:60749"/>
    </physiologicalReaction>
</comment>
<comment type="catalytic activity">
    <reaction evidence="3">
        <text>(Z,S)-jasmololone + (1R,3R)-chrysanthemoyl-CoA = jasmolin I + CoA</text>
        <dbReference type="Rhea" id="RHEA:60752"/>
        <dbReference type="ChEBI" id="CHEBI:39113"/>
        <dbReference type="ChEBI" id="CHEBI:57287"/>
        <dbReference type="ChEBI" id="CHEBI:143950"/>
        <dbReference type="ChEBI" id="CHEBI:143951"/>
    </reaction>
    <physiologicalReaction direction="left-to-right" evidence="3">
        <dbReference type="Rhea" id="RHEA:60753"/>
    </physiologicalReaction>
</comment>
<comment type="catalytic activity">
    <reaction evidence="3">
        <text>(Z,S)-cinerolone + (1R,3R)-chrysanthemoyl-CoA = cinerin I + CoA</text>
        <dbReference type="Rhea" id="RHEA:60756"/>
        <dbReference type="ChEBI" id="CHEBI:3706"/>
        <dbReference type="ChEBI" id="CHEBI:57287"/>
        <dbReference type="ChEBI" id="CHEBI:143950"/>
        <dbReference type="ChEBI" id="CHEBI:143952"/>
    </reaction>
    <physiologicalReaction direction="left-to-right" evidence="3">
        <dbReference type="Rhea" id="RHEA:60757"/>
    </physiologicalReaction>
</comment>
<comment type="catalytic activity">
    <reaction evidence="3">
        <text>(Z,S)-jasmololone + (1R,3R)-pyrethroyl-CoA = jasmolin II + CoA</text>
        <dbReference type="Rhea" id="RHEA:60760"/>
        <dbReference type="ChEBI" id="CHEBI:39114"/>
        <dbReference type="ChEBI" id="CHEBI:57287"/>
        <dbReference type="ChEBI" id="CHEBI:143951"/>
        <dbReference type="ChEBI" id="CHEBI:143953"/>
    </reaction>
    <physiologicalReaction direction="left-to-right" evidence="3">
        <dbReference type="Rhea" id="RHEA:60761"/>
    </physiologicalReaction>
</comment>
<comment type="catalytic activity">
    <reaction evidence="3">
        <text>(Z,S)-cinerolone + (1R,3R)-pyrethroyl-CoA = cinerin II + CoA</text>
        <dbReference type="Rhea" id="RHEA:60764"/>
        <dbReference type="ChEBI" id="CHEBI:3707"/>
        <dbReference type="ChEBI" id="CHEBI:57287"/>
        <dbReference type="ChEBI" id="CHEBI:143952"/>
        <dbReference type="ChEBI" id="CHEBI:143953"/>
    </reaction>
    <physiologicalReaction direction="left-to-right" evidence="3">
        <dbReference type="Rhea" id="RHEA:60765"/>
    </physiologicalReaction>
</comment>
<comment type="biophysicochemical properties">
    <kinetics>
        <KM evidence="3">768 uM for (1R,3R)-chrysanthemoyl CoA (in the presence of (S)-pyrethrolone, at pH 7.5 and 25 degrees Celsius)</KM>
        <KM evidence="3">30.7 uM for (S)-pyrethrolone (in the presence of (1R,3R)-chrysanthemoyl CoA, at pH 7.5 and 25 degrees Celsius)</KM>
        <KM evidence="3">1050 uM for (1R,3R)-pyrethroyl CoA (in the presence of (S)-pyrethrolone, at pH 7.5 and 25 degrees Celsius)</KM>
        <KM evidence="3">31.7 uM for (S)-pyrethrolone (in the presence of (1R,3R)-pyrethroyl CoA, at pH 7.5 and 25 degrees Celsius)</KM>
        <Vmax evidence="3">1.52 nmol/sec/mg enzyme with (1R,3R)-chrysanthemoyl CoA as substrate (in the presence of (S)-pyrethrolone, at pH 7.5 and 25 degrees Celsius)</Vmax>
        <Vmax evidence="3">0.95 nmol/sec/mg enzyme with (1R,3R)-pyrethroyl CoA as substrate (in the presence of (S)-pyrethrolone, at pH 7.5 and 25 degrees Celsius)</Vmax>
        <Vmax evidence="3">1.17 nmol/sec/mg enzyme with (S)-pyrethrolone as substrate (in the presence of (1R,3R)-chrysanthemoyl CoA, at pH 7.5 and 25 degrees Celsius)</Vmax>
        <Vmax evidence="3">0.65 nmol/sec/mg enzyme with (S)-pyrethrolone as substrate (in the presence of (1R,3R)-pyrethroyl CoA, at pH 7.5 and 25 degrees Celsius)</Vmax>
        <Vmax evidence="3">0.0105 nmol/sec/mg enzyme with pyrethrin I as substrate (in the absence of CoA, at pH 7.5 and 25 degrees Celsius)</Vmax>
        <Vmax evidence="3">0.0305 nmol/sec/mg enzyme with pyrethrin I as substrate (in the presence of CoA, at pH 7.5 and 25 degrees Celsius)</Vmax>
        <Vmax evidence="3">0.88 nmol/sec/mg enzyme with p-nitrophenyl butanoate as substrate (at pH 7.5 and 25 degrees Celsius)</Vmax>
        <Vmax evidence="3">0.309 nmol/sec/mg enzyme with p-nitrophenyl octanoate as substrate (at pH 7.5 and 25 degrees Celsius)</Vmax>
    </kinetics>
    <phDependence>
        <text evidence="3">Optimum pH is 7.5.</text>
    </phDependence>
    <temperatureDependence>
        <text evidence="3">Optimum temperature is 25 degrees Celsius.</text>
    </temperatureDependence>
</comment>
<comment type="pathway">
    <text evidence="3">Isoprenoid biosynthesis.</text>
</comment>
<comment type="subcellular location">
    <subcellularLocation>
        <location evidence="3">Secreted</location>
        <location evidence="3">Extracellular space</location>
    </subcellularLocation>
</comment>
<comment type="tissue specificity">
    <text evidence="3 4 5">Restricted to the pericarp during achene maturation (PubMed:23104830). Expressed in the leaves of mature plants and seedlings, as well as in buds and flowers (PubMed:22385412, PubMed:29122986). Present in disk florets (PubMed:29122986).</text>
</comment>
<comment type="developmental stage">
    <text evidence="4">Mostly expressed in ovaries of flowers at stages S1 to S7 (bud to overblown), before the first disk florets opening, and prior embryos formation.</text>
</comment>
<comment type="induction">
    <text evidence="3">By wounding.</text>
</comment>
<comment type="similarity">
    <text evidence="9">Belongs to the 'GDSL' lipolytic enzyme family.</text>
</comment>
<protein>
    <recommendedName>
        <fullName evidence="6 7">GDSL lipase</fullName>
        <shortName evidence="6 7">TcGLIP</shortName>
        <ecNumber evidence="9">3.1.1.-</ecNumber>
    </recommendedName>
    <alternativeName>
        <fullName evidence="10">Pyrethrin type I synthase</fullName>
    </alternativeName>
</protein>
<sequence>MAVASRKLGALVLVAVLCLSLPTGCLSSQQAAALFIFGDSVFDPGNNNHINTHVNFKANFWPYGQSYFSSPTGRFSDGRIIPDFIAEYASLPIIPAYLEPNNDFTHGANFASAGAGALIASHAGLAVGLQTQLRYFGDLVDHYRQNLGDIKSRQLLSDAVYLFSCGGNDYQSPYYPYTQEQYVDIVIGNMTNVIKGIYEKGGRKFGVVNVPLIGCWPGMRAKQPGNTCNTEVDELTRLHNQAFAKRLEQLEKQLEGFVYAKFDLSTAILNRMKNPSKYGFKEGESACCGSGPFGGNYDCGRIKEFGLCDNATEYFFFDPFHPNELASRQFAEMFWDGDSMVTQPYNLKALFEGKPSTKYLPNDEL</sequence>
<keyword id="KW-0903">Direct protein sequencing</keyword>
<keyword id="KW-0325">Glycoprotein</keyword>
<keyword id="KW-0378">Hydrolase</keyword>
<keyword id="KW-0442">Lipid degradation</keyword>
<keyword id="KW-0443">Lipid metabolism</keyword>
<keyword id="KW-0964">Secreted</keyword>
<keyword id="KW-0732">Signal</keyword>
<name>GLIP_TANCI</name>
<accession>H6U1I8</accession>
<accession>H6U1I5</accession>
<accession>H6U1I7</accession>
<accession>H6U1J0</accession>
<proteinExistence type="evidence at protein level"/>